<evidence type="ECO:0000255" key="1">
    <source>
        <dbReference type="HAMAP-Rule" id="MF_01400"/>
    </source>
</evidence>
<evidence type="ECO:0000255" key="2">
    <source>
        <dbReference type="PROSITE-ProRule" id="PRU01126"/>
    </source>
</evidence>
<gene>
    <name evidence="1" type="primary">msrB</name>
    <name type="ordered locus">PSEEN1584</name>
</gene>
<organism>
    <name type="scientific">Pseudomonas entomophila (strain L48)</name>
    <dbReference type="NCBI Taxonomy" id="384676"/>
    <lineage>
        <taxon>Bacteria</taxon>
        <taxon>Pseudomonadati</taxon>
        <taxon>Pseudomonadota</taxon>
        <taxon>Gammaproteobacteria</taxon>
        <taxon>Pseudomonadales</taxon>
        <taxon>Pseudomonadaceae</taxon>
        <taxon>Pseudomonas</taxon>
    </lineage>
</organism>
<protein>
    <recommendedName>
        <fullName evidence="1">Peptide methionine sulfoxide reductase MsrB</fullName>
        <ecNumber evidence="1">1.8.4.12</ecNumber>
    </recommendedName>
    <alternativeName>
        <fullName evidence="1">Peptide-methionine (R)-S-oxide reductase</fullName>
    </alternativeName>
</protein>
<feature type="chain" id="PRO_1000068284" description="Peptide methionine sulfoxide reductase MsrB">
    <location>
        <begin position="1"/>
        <end position="131"/>
    </location>
</feature>
<feature type="domain" description="MsrB" evidence="2">
    <location>
        <begin position="8"/>
        <end position="130"/>
    </location>
</feature>
<feature type="active site" description="Nucleophile" evidence="2">
    <location>
        <position position="119"/>
    </location>
</feature>
<feature type="binding site" evidence="2">
    <location>
        <position position="47"/>
    </location>
    <ligand>
        <name>Zn(2+)</name>
        <dbReference type="ChEBI" id="CHEBI:29105"/>
    </ligand>
</feature>
<feature type="binding site" evidence="2">
    <location>
        <position position="50"/>
    </location>
    <ligand>
        <name>Zn(2+)</name>
        <dbReference type="ChEBI" id="CHEBI:29105"/>
    </ligand>
</feature>
<feature type="binding site" evidence="2">
    <location>
        <position position="96"/>
    </location>
    <ligand>
        <name>Zn(2+)</name>
        <dbReference type="ChEBI" id="CHEBI:29105"/>
    </ligand>
</feature>
<feature type="binding site" evidence="2">
    <location>
        <position position="99"/>
    </location>
    <ligand>
        <name>Zn(2+)</name>
        <dbReference type="ChEBI" id="CHEBI:29105"/>
    </ligand>
</feature>
<reference key="1">
    <citation type="journal article" date="2006" name="Nat. Biotechnol.">
        <title>Complete genome sequence of the entomopathogenic and metabolically versatile soil bacterium Pseudomonas entomophila.</title>
        <authorList>
            <person name="Vodovar N."/>
            <person name="Vallenet D."/>
            <person name="Cruveiller S."/>
            <person name="Rouy Z."/>
            <person name="Barbe V."/>
            <person name="Acosta C."/>
            <person name="Cattolico L."/>
            <person name="Jubin C."/>
            <person name="Lajus A."/>
            <person name="Segurens B."/>
            <person name="Vacherie B."/>
            <person name="Wincker P."/>
            <person name="Weissenbach J."/>
            <person name="Lemaitre B."/>
            <person name="Medigue C."/>
            <person name="Boccard F."/>
        </authorList>
    </citation>
    <scope>NUCLEOTIDE SEQUENCE [LARGE SCALE GENOMIC DNA]</scope>
    <source>
        <strain>L48</strain>
    </source>
</reference>
<keyword id="KW-0479">Metal-binding</keyword>
<keyword id="KW-0560">Oxidoreductase</keyword>
<keyword id="KW-0862">Zinc</keyword>
<comment type="catalytic activity">
    <reaction evidence="1">
        <text>L-methionyl-[protein] + [thioredoxin]-disulfide + H2O = L-methionyl-(R)-S-oxide-[protein] + [thioredoxin]-dithiol</text>
        <dbReference type="Rhea" id="RHEA:24164"/>
        <dbReference type="Rhea" id="RHEA-COMP:10698"/>
        <dbReference type="Rhea" id="RHEA-COMP:10700"/>
        <dbReference type="Rhea" id="RHEA-COMP:12313"/>
        <dbReference type="Rhea" id="RHEA-COMP:12314"/>
        <dbReference type="ChEBI" id="CHEBI:15377"/>
        <dbReference type="ChEBI" id="CHEBI:16044"/>
        <dbReference type="ChEBI" id="CHEBI:29950"/>
        <dbReference type="ChEBI" id="CHEBI:45764"/>
        <dbReference type="ChEBI" id="CHEBI:50058"/>
        <dbReference type="EC" id="1.8.4.12"/>
    </reaction>
</comment>
<comment type="cofactor">
    <cofactor evidence="1">
        <name>Zn(2+)</name>
        <dbReference type="ChEBI" id="CHEBI:29105"/>
    </cofactor>
    <text evidence="1">Binds 1 zinc ion per subunit. The zinc ion is important for the structural integrity of the protein.</text>
</comment>
<comment type="similarity">
    <text evidence="1">Belongs to the MsrB Met sulfoxide reductase family.</text>
</comment>
<accession>Q1ID16</accession>
<dbReference type="EC" id="1.8.4.12" evidence="1"/>
<dbReference type="EMBL" id="CT573326">
    <property type="protein sequence ID" value="CAK14445.1"/>
    <property type="molecule type" value="Genomic_DNA"/>
</dbReference>
<dbReference type="RefSeq" id="WP_011532858.1">
    <property type="nucleotide sequence ID" value="NC_008027.1"/>
</dbReference>
<dbReference type="SMR" id="Q1ID16"/>
<dbReference type="STRING" id="384676.PSEEN1584"/>
<dbReference type="GeneID" id="32804826"/>
<dbReference type="KEGG" id="pen:PSEEN1584"/>
<dbReference type="eggNOG" id="COG0229">
    <property type="taxonomic scope" value="Bacteria"/>
</dbReference>
<dbReference type="HOGENOM" id="CLU_031040_8_5_6"/>
<dbReference type="OrthoDB" id="9785497at2"/>
<dbReference type="Proteomes" id="UP000000658">
    <property type="component" value="Chromosome"/>
</dbReference>
<dbReference type="GO" id="GO:0005737">
    <property type="term" value="C:cytoplasm"/>
    <property type="evidence" value="ECO:0007669"/>
    <property type="project" value="TreeGrafter"/>
</dbReference>
<dbReference type="GO" id="GO:0033743">
    <property type="term" value="F:peptide-methionine (R)-S-oxide reductase activity"/>
    <property type="evidence" value="ECO:0007669"/>
    <property type="project" value="UniProtKB-UniRule"/>
</dbReference>
<dbReference type="GO" id="GO:0008270">
    <property type="term" value="F:zinc ion binding"/>
    <property type="evidence" value="ECO:0007669"/>
    <property type="project" value="UniProtKB-UniRule"/>
</dbReference>
<dbReference type="GO" id="GO:0030091">
    <property type="term" value="P:protein repair"/>
    <property type="evidence" value="ECO:0007669"/>
    <property type="project" value="InterPro"/>
</dbReference>
<dbReference type="GO" id="GO:0006979">
    <property type="term" value="P:response to oxidative stress"/>
    <property type="evidence" value="ECO:0007669"/>
    <property type="project" value="InterPro"/>
</dbReference>
<dbReference type="FunFam" id="2.170.150.20:FF:000001">
    <property type="entry name" value="Peptide methionine sulfoxide reductase MsrB"/>
    <property type="match status" value="1"/>
</dbReference>
<dbReference type="Gene3D" id="2.170.150.20">
    <property type="entry name" value="Peptide methionine sulfoxide reductase"/>
    <property type="match status" value="1"/>
</dbReference>
<dbReference type="HAMAP" id="MF_01400">
    <property type="entry name" value="MsrB"/>
    <property type="match status" value="1"/>
</dbReference>
<dbReference type="InterPro" id="IPR028427">
    <property type="entry name" value="Met_Sox_Rdtase_MsrB"/>
</dbReference>
<dbReference type="InterPro" id="IPR002579">
    <property type="entry name" value="Met_Sox_Rdtase_MsrB_dom"/>
</dbReference>
<dbReference type="InterPro" id="IPR011057">
    <property type="entry name" value="Mss4-like_sf"/>
</dbReference>
<dbReference type="NCBIfam" id="TIGR00357">
    <property type="entry name" value="peptide-methionine (R)-S-oxide reductase MsrB"/>
    <property type="match status" value="1"/>
</dbReference>
<dbReference type="PANTHER" id="PTHR10173">
    <property type="entry name" value="METHIONINE SULFOXIDE REDUCTASE"/>
    <property type="match status" value="1"/>
</dbReference>
<dbReference type="PANTHER" id="PTHR10173:SF52">
    <property type="entry name" value="METHIONINE-R-SULFOXIDE REDUCTASE B1"/>
    <property type="match status" value="1"/>
</dbReference>
<dbReference type="Pfam" id="PF01641">
    <property type="entry name" value="SelR"/>
    <property type="match status" value="1"/>
</dbReference>
<dbReference type="SUPFAM" id="SSF51316">
    <property type="entry name" value="Mss4-like"/>
    <property type="match status" value="1"/>
</dbReference>
<dbReference type="PROSITE" id="PS51790">
    <property type="entry name" value="MSRB"/>
    <property type="match status" value="1"/>
</dbReference>
<sequence>MQKIDKTLEEWRAMLDPAQYQVCRLKGTERPFSGKYNSERRDGVYHCICCDLPLFDSKAKFDSGCGWPSFYEPIEEAAMIEIRDTSHGMIRTEVTCAQCDAHLGHVFPDGPPPTGLRYCINSVCLDLKPRD</sequence>
<proteinExistence type="inferred from homology"/>
<name>MSRB_PSEE4</name>